<accession>B2IVH8</accession>
<keyword id="KW-1185">Reference proteome</keyword>
<keyword id="KW-0687">Ribonucleoprotein</keyword>
<keyword id="KW-0689">Ribosomal protein</keyword>
<keyword id="KW-0694">RNA-binding</keyword>
<keyword id="KW-0699">rRNA-binding</keyword>
<sequence length="152" mass="16780">MAKRVQLVLNQDISKLGKSGDLVEVAPGYARNYLIPQKLATNATPGILKQVERRREQERQRQLELRQQALEQKESLEKVGSLTIAKQVGENEAIFGTITTQDVADAIKAATGQEVDRRGITIPDINHLGTYQAEIKLYSDVAAQVDIQVVAS</sequence>
<reference key="1">
    <citation type="journal article" date="2013" name="Plant Physiol.">
        <title>A Nostoc punctiforme Sugar Transporter Necessary to Establish a Cyanobacterium-Plant Symbiosis.</title>
        <authorList>
            <person name="Ekman M."/>
            <person name="Picossi S."/>
            <person name="Campbell E.L."/>
            <person name="Meeks J.C."/>
            <person name="Flores E."/>
        </authorList>
    </citation>
    <scope>NUCLEOTIDE SEQUENCE [LARGE SCALE GENOMIC DNA]</scope>
    <source>
        <strain>ATCC 29133 / PCC 73102</strain>
    </source>
</reference>
<gene>
    <name evidence="1" type="primary">rplI</name>
    <name evidence="1" type="synonym">rpl9</name>
    <name type="ordered locus">Npun_F2830</name>
</gene>
<feature type="chain" id="PRO_1000126946" description="Large ribosomal subunit protein bL9">
    <location>
        <begin position="1"/>
        <end position="152"/>
    </location>
</feature>
<protein>
    <recommendedName>
        <fullName evidence="1">Large ribosomal subunit protein bL9</fullName>
    </recommendedName>
    <alternativeName>
        <fullName evidence="2">50S ribosomal protein L9</fullName>
    </alternativeName>
</protein>
<organism>
    <name type="scientific">Nostoc punctiforme (strain ATCC 29133 / PCC 73102)</name>
    <dbReference type="NCBI Taxonomy" id="63737"/>
    <lineage>
        <taxon>Bacteria</taxon>
        <taxon>Bacillati</taxon>
        <taxon>Cyanobacteriota</taxon>
        <taxon>Cyanophyceae</taxon>
        <taxon>Nostocales</taxon>
        <taxon>Nostocaceae</taxon>
        <taxon>Nostoc</taxon>
    </lineage>
</organism>
<name>RL9_NOSP7</name>
<evidence type="ECO:0000255" key="1">
    <source>
        <dbReference type="HAMAP-Rule" id="MF_00503"/>
    </source>
</evidence>
<evidence type="ECO:0000305" key="2"/>
<dbReference type="EMBL" id="CP001037">
    <property type="protein sequence ID" value="ACC81363.1"/>
    <property type="molecule type" value="Genomic_DNA"/>
</dbReference>
<dbReference type="RefSeq" id="WP_012409356.1">
    <property type="nucleotide sequence ID" value="NC_010628.1"/>
</dbReference>
<dbReference type="SMR" id="B2IVH8"/>
<dbReference type="STRING" id="63737.Npun_F2830"/>
<dbReference type="EnsemblBacteria" id="ACC81363">
    <property type="protein sequence ID" value="ACC81363"/>
    <property type="gene ID" value="Npun_F2830"/>
</dbReference>
<dbReference type="KEGG" id="npu:Npun_F2830"/>
<dbReference type="eggNOG" id="COG0359">
    <property type="taxonomic scope" value="Bacteria"/>
</dbReference>
<dbReference type="HOGENOM" id="CLU_078938_5_1_3"/>
<dbReference type="OrthoDB" id="9788336at2"/>
<dbReference type="PhylomeDB" id="B2IVH8"/>
<dbReference type="Proteomes" id="UP000001191">
    <property type="component" value="Chromosome"/>
</dbReference>
<dbReference type="GO" id="GO:1990904">
    <property type="term" value="C:ribonucleoprotein complex"/>
    <property type="evidence" value="ECO:0007669"/>
    <property type="project" value="UniProtKB-KW"/>
</dbReference>
<dbReference type="GO" id="GO:0005840">
    <property type="term" value="C:ribosome"/>
    <property type="evidence" value="ECO:0007669"/>
    <property type="project" value="UniProtKB-KW"/>
</dbReference>
<dbReference type="GO" id="GO:0019843">
    <property type="term" value="F:rRNA binding"/>
    <property type="evidence" value="ECO:0007669"/>
    <property type="project" value="UniProtKB-UniRule"/>
</dbReference>
<dbReference type="GO" id="GO:0003735">
    <property type="term" value="F:structural constituent of ribosome"/>
    <property type="evidence" value="ECO:0007669"/>
    <property type="project" value="InterPro"/>
</dbReference>
<dbReference type="GO" id="GO:0006412">
    <property type="term" value="P:translation"/>
    <property type="evidence" value="ECO:0007669"/>
    <property type="project" value="UniProtKB-UniRule"/>
</dbReference>
<dbReference type="FunFam" id="3.40.5.10:FF:000003">
    <property type="entry name" value="50S ribosomal protein L9"/>
    <property type="match status" value="1"/>
</dbReference>
<dbReference type="Gene3D" id="3.10.430.100">
    <property type="entry name" value="Ribosomal protein L9, C-terminal domain"/>
    <property type="match status" value="1"/>
</dbReference>
<dbReference type="Gene3D" id="3.40.5.10">
    <property type="entry name" value="Ribosomal protein L9, N-terminal domain"/>
    <property type="match status" value="1"/>
</dbReference>
<dbReference type="HAMAP" id="MF_00503">
    <property type="entry name" value="Ribosomal_bL9"/>
    <property type="match status" value="1"/>
</dbReference>
<dbReference type="InterPro" id="IPR000244">
    <property type="entry name" value="Ribosomal_bL9"/>
</dbReference>
<dbReference type="InterPro" id="IPR009027">
    <property type="entry name" value="Ribosomal_bL9/RNase_H1_N"/>
</dbReference>
<dbReference type="InterPro" id="IPR020594">
    <property type="entry name" value="Ribosomal_bL9_bac/chp"/>
</dbReference>
<dbReference type="InterPro" id="IPR020069">
    <property type="entry name" value="Ribosomal_bL9_C"/>
</dbReference>
<dbReference type="InterPro" id="IPR036791">
    <property type="entry name" value="Ribosomal_bL9_C_sf"/>
</dbReference>
<dbReference type="InterPro" id="IPR020070">
    <property type="entry name" value="Ribosomal_bL9_N"/>
</dbReference>
<dbReference type="InterPro" id="IPR036935">
    <property type="entry name" value="Ribosomal_bL9_N_sf"/>
</dbReference>
<dbReference type="NCBIfam" id="TIGR00158">
    <property type="entry name" value="L9"/>
    <property type="match status" value="1"/>
</dbReference>
<dbReference type="PANTHER" id="PTHR21368">
    <property type="entry name" value="50S RIBOSOMAL PROTEIN L9"/>
    <property type="match status" value="1"/>
</dbReference>
<dbReference type="Pfam" id="PF03948">
    <property type="entry name" value="Ribosomal_L9_C"/>
    <property type="match status" value="1"/>
</dbReference>
<dbReference type="Pfam" id="PF01281">
    <property type="entry name" value="Ribosomal_L9_N"/>
    <property type="match status" value="1"/>
</dbReference>
<dbReference type="SUPFAM" id="SSF55658">
    <property type="entry name" value="L9 N-domain-like"/>
    <property type="match status" value="1"/>
</dbReference>
<dbReference type="SUPFAM" id="SSF55653">
    <property type="entry name" value="Ribosomal protein L9 C-domain"/>
    <property type="match status" value="1"/>
</dbReference>
<dbReference type="PROSITE" id="PS00651">
    <property type="entry name" value="RIBOSOMAL_L9"/>
    <property type="match status" value="1"/>
</dbReference>
<comment type="function">
    <text evidence="1">Binds to the 23S rRNA.</text>
</comment>
<comment type="similarity">
    <text evidence="1">Belongs to the bacterial ribosomal protein bL9 family.</text>
</comment>
<proteinExistence type="inferred from homology"/>